<feature type="chain" id="PRO_0000439271" description="Fructose import permease protein FruG">
    <location>
        <begin position="1"/>
        <end position="340"/>
    </location>
</feature>
<feature type="transmembrane region" description="Helical" evidence="1">
    <location>
        <begin position="23"/>
        <end position="43"/>
    </location>
</feature>
<feature type="transmembrane region" description="Helical" evidence="1">
    <location>
        <begin position="49"/>
        <end position="69"/>
    </location>
</feature>
<feature type="transmembrane region" description="Helical" evidence="1">
    <location>
        <begin position="73"/>
        <end position="93"/>
    </location>
</feature>
<feature type="transmembrane region" description="Helical" evidence="1">
    <location>
        <begin position="101"/>
        <end position="121"/>
    </location>
</feature>
<feature type="transmembrane region" description="Helical" evidence="1">
    <location>
        <begin position="130"/>
        <end position="150"/>
    </location>
</feature>
<feature type="transmembrane region" description="Helical" evidence="1">
    <location>
        <begin position="182"/>
        <end position="202"/>
    </location>
</feature>
<feature type="transmembrane region" description="Helical" evidence="1">
    <location>
        <begin position="234"/>
        <end position="254"/>
    </location>
</feature>
<feature type="transmembrane region" description="Helical" evidence="1">
    <location>
        <begin position="273"/>
        <end position="293"/>
    </location>
</feature>
<feature type="transmembrane region" description="Helical" evidence="1">
    <location>
        <begin position="307"/>
        <end position="327"/>
    </location>
</feature>
<organism>
    <name type="scientific">Bifidobacterium longum (strain NCC 2705)</name>
    <dbReference type="NCBI Taxonomy" id="206672"/>
    <lineage>
        <taxon>Bacteria</taxon>
        <taxon>Bacillati</taxon>
        <taxon>Actinomycetota</taxon>
        <taxon>Actinomycetes</taxon>
        <taxon>Bifidobacteriales</taxon>
        <taxon>Bifidobacteriaceae</taxon>
        <taxon>Bifidobacterium</taxon>
    </lineage>
</organism>
<comment type="function">
    <text evidence="2">Part of the high-affinity ABC transporter complex FruEKFG involved in fructose uptake. Can also transport ribose and xylose, with lower affinity. Probably responsible for the translocation of the substrate across the membrane.</text>
</comment>
<comment type="subunit">
    <text evidence="2">The complex is composed of an ATP-binding protein (FruK), two transmembrane proteins (FruF and FruG) and a solute-binding protein (FruE).</text>
</comment>
<comment type="subcellular location">
    <subcellularLocation>
        <location evidence="4">Cell membrane</location>
        <topology evidence="1">Multi-pass membrane protein</topology>
    </subcellularLocation>
</comment>
<comment type="similarity">
    <text evidence="4">Belongs to the binding-protein-dependent transport system permease family.</text>
</comment>
<dbReference type="EMBL" id="AE014295">
    <property type="protein sequence ID" value="AAN23903.1"/>
    <property type="molecule type" value="Genomic_DNA"/>
</dbReference>
<dbReference type="RefSeq" id="NP_695267.1">
    <property type="nucleotide sequence ID" value="NC_004307.2"/>
</dbReference>
<dbReference type="RefSeq" id="WP_007053225.1">
    <property type="nucleotide sequence ID" value="NC_004307.2"/>
</dbReference>
<dbReference type="STRING" id="206672.BL0036"/>
<dbReference type="TCDB" id="3.A.1.2.23">
    <property type="family name" value="the atp-binding cassette (abc) superfamily"/>
</dbReference>
<dbReference type="EnsemblBacteria" id="AAN23903">
    <property type="protein sequence ID" value="AAN23903"/>
    <property type="gene ID" value="BL0036"/>
</dbReference>
<dbReference type="KEGG" id="blo:BL0036"/>
<dbReference type="PATRIC" id="fig|206672.9.peg.38"/>
<dbReference type="HOGENOM" id="CLU_028880_3_3_11"/>
<dbReference type="OrthoDB" id="9808136at2"/>
<dbReference type="PhylomeDB" id="Q8G845"/>
<dbReference type="Proteomes" id="UP000000439">
    <property type="component" value="Chromosome"/>
</dbReference>
<dbReference type="GO" id="GO:0005886">
    <property type="term" value="C:plasma membrane"/>
    <property type="evidence" value="ECO:0007669"/>
    <property type="project" value="UniProtKB-SubCell"/>
</dbReference>
<dbReference type="GO" id="GO:0022857">
    <property type="term" value="F:transmembrane transporter activity"/>
    <property type="evidence" value="ECO:0007669"/>
    <property type="project" value="InterPro"/>
</dbReference>
<dbReference type="CDD" id="cd06579">
    <property type="entry name" value="TM_PBP1_transp_AraH_like"/>
    <property type="match status" value="1"/>
</dbReference>
<dbReference type="InterPro" id="IPR001851">
    <property type="entry name" value="ABC_transp_permease"/>
</dbReference>
<dbReference type="PANTHER" id="PTHR32196">
    <property type="entry name" value="ABC TRANSPORTER PERMEASE PROTEIN YPHD-RELATED-RELATED"/>
    <property type="match status" value="1"/>
</dbReference>
<dbReference type="PANTHER" id="PTHR32196:SF63">
    <property type="entry name" value="INNER MEMBRANE ABC TRANSPORTER PERMEASE PROTEIN YJFF"/>
    <property type="match status" value="1"/>
</dbReference>
<dbReference type="Pfam" id="PF02653">
    <property type="entry name" value="BPD_transp_2"/>
    <property type="match status" value="1"/>
</dbReference>
<protein>
    <recommendedName>
        <fullName evidence="4">Fructose import permease protein FruG</fullName>
    </recommendedName>
</protein>
<reference key="1">
    <citation type="journal article" date="2002" name="Proc. Natl. Acad. Sci. U.S.A.">
        <title>The genome sequence of Bifidobacterium longum reflects its adaptation to the human gastrointestinal tract.</title>
        <authorList>
            <person name="Schell M.A."/>
            <person name="Karmirantzou M."/>
            <person name="Snel B."/>
            <person name="Vilanova D."/>
            <person name="Berger B."/>
            <person name="Pessi G."/>
            <person name="Zwahlen M.-C."/>
            <person name="Desiere F."/>
            <person name="Bork P."/>
            <person name="Delley M."/>
            <person name="Pridmore R.D."/>
            <person name="Arigoni F."/>
        </authorList>
    </citation>
    <scope>NUCLEOTIDE SEQUENCE [LARGE SCALE GENOMIC DNA]</scope>
    <source>
        <strain>NCC 2705</strain>
    </source>
</reference>
<reference key="2">
    <citation type="journal article" date="2012" name="J. Biol. Chem.">
        <title>Fructose uptake in Bifidobacterium longum NCC2705 is mediated by an ATP-binding cassette transporter.</title>
        <authorList>
            <person name="Wei X."/>
            <person name="Guo Y."/>
            <person name="Shao C."/>
            <person name="Sun Z."/>
            <person name="Zhurina D."/>
            <person name="Liu D."/>
            <person name="Liu W."/>
            <person name="Zou D."/>
            <person name="Jiang Z."/>
            <person name="Wang X."/>
            <person name="Zhao J."/>
            <person name="Shang W."/>
            <person name="Li X."/>
            <person name="Liao X."/>
            <person name="Huang L."/>
            <person name="Riedel C.U."/>
            <person name="Yuan J."/>
        </authorList>
    </citation>
    <scope>FUNCTION</scope>
    <scope>SUBUNIT</scope>
    <scope>INTERACTION WITH FRUK AND FRUE</scope>
    <source>
        <strain>NCC 2705</strain>
    </source>
</reference>
<name>FRUG_BIFLO</name>
<keyword id="KW-1003">Cell membrane</keyword>
<keyword id="KW-0472">Membrane</keyword>
<keyword id="KW-1185">Reference proteome</keyword>
<keyword id="KW-0762">Sugar transport</keyword>
<keyword id="KW-0812">Transmembrane</keyword>
<keyword id="KW-1133">Transmembrane helix</keyword>
<keyword id="KW-0813">Transport</keyword>
<evidence type="ECO:0000255" key="1"/>
<evidence type="ECO:0000269" key="2">
    <source>
    </source>
</evidence>
<evidence type="ECO:0000303" key="3">
    <source>
    </source>
</evidence>
<evidence type="ECO:0000305" key="4"/>
<evidence type="ECO:0000312" key="5">
    <source>
        <dbReference type="EMBL" id="AAN23903.1"/>
    </source>
</evidence>
<sequence>MTTATANKVKAPKKGFKLDRQMIPTLAAVVIFILMIIMGQALFGTYIRLGFISSLFIDHAYLIILAVAMTLPILTGGIDLSVGAIVAITAVVGLKLANAGVPAFLVMIIMLLIGAVFGLLAGTLIEEFNMQPFIATLSTMFLARGLASIISTDSLTFPQGNDFSFISNVIKIIDNPKISNDLSFNVGVIIALVVVVFGYVFLHHTRTGRTIYAIGGSRSSAELMGLPVKRTQYIIYLTSATLAALASIVYTANIGSAKNTVGVGWELDAVASVVIGGTIITGGFGYVLGSVLGSLVRSILDPLTSDFGVPAEWTTIVIGLMILVFVVLQRAVMAVGGDKK</sequence>
<proteinExistence type="evidence at protein level"/>
<accession>Q8G845</accession>
<gene>
    <name evidence="3" type="primary">fruG</name>
    <name evidence="5" type="ordered locus">BL0036</name>
</gene>